<organism>
    <name type="scientific">Eremothecium gossypii (strain ATCC 10895 / CBS 109.51 / FGSC 9923 / NRRL Y-1056)</name>
    <name type="common">Yeast</name>
    <name type="synonym">Ashbya gossypii</name>
    <dbReference type="NCBI Taxonomy" id="284811"/>
    <lineage>
        <taxon>Eukaryota</taxon>
        <taxon>Fungi</taxon>
        <taxon>Dikarya</taxon>
        <taxon>Ascomycota</taxon>
        <taxon>Saccharomycotina</taxon>
        <taxon>Saccharomycetes</taxon>
        <taxon>Saccharomycetales</taxon>
        <taxon>Saccharomycetaceae</taxon>
        <taxon>Eremothecium</taxon>
    </lineage>
</organism>
<sequence>MGDIVFVSAALYLANSPNWKSKVLKPGFSPIPSNELYNFEQTLKSTSQEPVSSTAVSKAPEKSALDAEDGGLRLDYKGPKYQELRLFLPISLTQQLHTLVIQNIPESATKTADFIQWLEQATTKHFSTKTDGTKVEDLVENWSSVIASTLESTQDIFIRMYPLTEFAQVVLYWIEWFSKATDSVTTVHIDENTARYIDDIVPSSYTPDVTEEELVALRTQIADLKSSVSESSTENAAMVAYEVDMSTLSDLPKSSLNQLVKDIIEFRTRVLTMEREKRTQEALEEGRRRRSQLKRVMEQIRKSKGSSVPATEPEEDEDEYEDEDGEEDWAIERRRLEKEKESAQQSYNALLSHLNGTVMPDLRARKQRLILLKDYEAKLQRERAFFLKELLHLGNSDYYDHRREFKEEEEQQDDVDRRAQNEQRIQAPKDAVLQASASASRSPDTSAAHSAPVQEPVAKEQKIKLALKRVFDTRAQEAESDSEPEADIPATAVSASTPAPTADLPDRLPFQGPELAARMAELRQSRLVDELVNEYLGVYEDELVDYILDNIVENASRGQLLLELQETFDDDSVRIVDAIWAKLLKH</sequence>
<accession>Q750D5</accession>
<keyword id="KW-0175">Coiled coil</keyword>
<keyword id="KW-0963">Cytoplasm</keyword>
<keyword id="KW-0507">mRNA processing</keyword>
<keyword id="KW-0508">mRNA splicing</keyword>
<keyword id="KW-0539">Nucleus</keyword>
<keyword id="KW-1185">Reference proteome</keyword>
<keyword id="KW-0687">Ribonucleoprotein</keyword>
<keyword id="KW-0694">RNA-binding</keyword>
<keyword id="KW-0747">Spliceosome</keyword>
<name>SNU71_EREGS</name>
<gene>
    <name type="primary">SNU71</name>
    <name type="ordered locus">AGR020C</name>
</gene>
<protein>
    <recommendedName>
        <fullName>U1 small nuclear ribonucleoprotein component SNU71</fullName>
    </recommendedName>
</protein>
<feature type="chain" id="PRO_0000333454" description="U1 small nuclear ribonucleoprotein component SNU71">
    <location>
        <begin position="1"/>
        <end position="586"/>
    </location>
</feature>
<feature type="region of interest" description="Disordered" evidence="3">
    <location>
        <begin position="276"/>
        <end position="328"/>
    </location>
</feature>
<feature type="region of interest" description="Disordered" evidence="3">
    <location>
        <begin position="406"/>
        <end position="455"/>
    </location>
</feature>
<feature type="region of interest" description="Disordered" evidence="3">
    <location>
        <begin position="474"/>
        <end position="506"/>
    </location>
</feature>
<feature type="coiled-coil region" evidence="2">
    <location>
        <begin position="274"/>
        <end position="356"/>
    </location>
</feature>
<feature type="compositionally biased region" description="Basic and acidic residues" evidence="3">
    <location>
        <begin position="276"/>
        <end position="287"/>
    </location>
</feature>
<feature type="compositionally biased region" description="Acidic residues" evidence="3">
    <location>
        <begin position="312"/>
        <end position="328"/>
    </location>
</feature>
<feature type="compositionally biased region" description="Polar residues" evidence="3">
    <location>
        <begin position="435"/>
        <end position="448"/>
    </location>
</feature>
<feature type="compositionally biased region" description="Low complexity" evidence="3">
    <location>
        <begin position="489"/>
        <end position="502"/>
    </location>
</feature>
<evidence type="ECO:0000250" key="1"/>
<evidence type="ECO:0000255" key="2"/>
<evidence type="ECO:0000256" key="3">
    <source>
        <dbReference type="SAM" id="MobiDB-lite"/>
    </source>
</evidence>
<evidence type="ECO:0000305" key="4"/>
<proteinExistence type="inferred from homology"/>
<dbReference type="EMBL" id="AE016820">
    <property type="protein sequence ID" value="AAS54509.2"/>
    <property type="molecule type" value="Genomic_DNA"/>
</dbReference>
<dbReference type="RefSeq" id="NP_986685.2">
    <property type="nucleotide sequence ID" value="NM_211747.2"/>
</dbReference>
<dbReference type="SMR" id="Q750D5"/>
<dbReference type="FunCoup" id="Q750D5">
    <property type="interactions" value="192"/>
</dbReference>
<dbReference type="STRING" id="284811.Q750D5"/>
<dbReference type="EnsemblFungi" id="AAS54509">
    <property type="protein sequence ID" value="AAS54509"/>
    <property type="gene ID" value="AGOS_AGR020C"/>
</dbReference>
<dbReference type="GeneID" id="4622984"/>
<dbReference type="KEGG" id="ago:AGOS_AGR020C"/>
<dbReference type="eggNOG" id="KOG2253">
    <property type="taxonomic scope" value="Eukaryota"/>
</dbReference>
<dbReference type="HOGENOM" id="CLU_031562_0_0_1"/>
<dbReference type="InParanoid" id="Q750D5"/>
<dbReference type="OrthoDB" id="6275295at2759"/>
<dbReference type="Proteomes" id="UP000000591">
    <property type="component" value="Chromosome VII"/>
</dbReference>
<dbReference type="GO" id="GO:0005737">
    <property type="term" value="C:cytoplasm"/>
    <property type="evidence" value="ECO:0007669"/>
    <property type="project" value="UniProtKB-SubCell"/>
</dbReference>
<dbReference type="GO" id="GO:0005685">
    <property type="term" value="C:U1 snRNP"/>
    <property type="evidence" value="ECO:0007669"/>
    <property type="project" value="EnsemblFungi"/>
</dbReference>
<dbReference type="GO" id="GO:0071004">
    <property type="term" value="C:U2-type prespliceosome"/>
    <property type="evidence" value="ECO:0007669"/>
    <property type="project" value="EnsemblFungi"/>
</dbReference>
<dbReference type="GO" id="GO:0003723">
    <property type="term" value="F:RNA binding"/>
    <property type="evidence" value="ECO:0007669"/>
    <property type="project" value="UniProtKB-KW"/>
</dbReference>
<dbReference type="GO" id="GO:0000398">
    <property type="term" value="P:mRNA splicing, via spliceosome"/>
    <property type="evidence" value="ECO:0007669"/>
    <property type="project" value="EnsemblFungi"/>
</dbReference>
<dbReference type="Gene3D" id="1.20.1390.10">
    <property type="entry name" value="PWI domain"/>
    <property type="match status" value="1"/>
</dbReference>
<dbReference type="InterPro" id="IPR002483">
    <property type="entry name" value="PWI_dom"/>
</dbReference>
<dbReference type="Pfam" id="PF24826">
    <property type="entry name" value="SNU71_N"/>
    <property type="match status" value="1"/>
</dbReference>
<dbReference type="Pfam" id="PF24825">
    <property type="entry name" value="SNU71_RBD"/>
    <property type="match status" value="1"/>
</dbReference>
<dbReference type="SMART" id="SM00311">
    <property type="entry name" value="PWI"/>
    <property type="match status" value="1"/>
</dbReference>
<reference key="1">
    <citation type="journal article" date="2004" name="Science">
        <title>The Ashbya gossypii genome as a tool for mapping the ancient Saccharomyces cerevisiae genome.</title>
        <authorList>
            <person name="Dietrich F.S."/>
            <person name="Voegeli S."/>
            <person name="Brachat S."/>
            <person name="Lerch A."/>
            <person name="Gates K."/>
            <person name="Steiner S."/>
            <person name="Mohr C."/>
            <person name="Poehlmann R."/>
            <person name="Luedi P."/>
            <person name="Choi S."/>
            <person name="Wing R.A."/>
            <person name="Flavier A."/>
            <person name="Gaffney T.D."/>
            <person name="Philippsen P."/>
        </authorList>
    </citation>
    <scope>NUCLEOTIDE SEQUENCE [LARGE SCALE GENOMIC DNA]</scope>
    <source>
        <strain>ATCC 10895 / CBS 109.51 / FGSC 9923 / NRRL Y-1056</strain>
    </source>
</reference>
<reference key="2">
    <citation type="journal article" date="2013" name="G3 (Bethesda)">
        <title>Genomes of Ashbya fungi isolated from insects reveal four mating-type loci, numerous translocations, lack of transposons, and distinct gene duplications.</title>
        <authorList>
            <person name="Dietrich F.S."/>
            <person name="Voegeli S."/>
            <person name="Kuo S."/>
            <person name="Philippsen P."/>
        </authorList>
    </citation>
    <scope>GENOME REANNOTATION</scope>
    <scope>SEQUENCE REVISION TO 492; 500 AND 503-505</scope>
    <source>
        <strain>ATCC 10895 / CBS 109.51 / FGSC 9923 / NRRL Y-1056</strain>
    </source>
</reference>
<comment type="function">
    <text evidence="1">Component of the U1 snRNP particle, which recognizes and binds the 5'-splice site of pre-mRNA. Together with other non-snRNP factors, U1 snRNP forms the spliceosomal commitment complex, that targets pre-mRNA to the splicing pathway (By similarity).</text>
</comment>
<comment type="subunit">
    <text evidence="1">Component of the U1 snRNP particle, a subcomplex of the spliceosome.</text>
</comment>
<comment type="subcellular location">
    <subcellularLocation>
        <location evidence="1">Cytoplasm</location>
    </subcellularLocation>
    <subcellularLocation>
        <location evidence="1">Nucleus</location>
    </subcellularLocation>
</comment>
<comment type="similarity">
    <text evidence="4">Belongs to the SNU71 family.</text>
</comment>